<comment type="function">
    <text>Is thought to be an important plant defense-related product against fungal pathogens.</text>
</comment>
<comment type="catalytic activity">
    <reaction>
        <text>Hydrolysis of (1-&gt;3)-beta-D-glucosidic linkages in (1-&gt;3)-beta-D-glucans.</text>
        <dbReference type="EC" id="3.2.1.39"/>
    </reaction>
</comment>
<comment type="induction">
    <text>Associated with aluminum toxicity.</text>
</comment>
<comment type="PTM">
    <text evidence="1">Contains two additional disulfide bonds.</text>
</comment>
<comment type="similarity">
    <text evidence="4">Belongs to the glycosyl hydrolase 17 family.</text>
</comment>
<reference key="1">
    <citation type="online journal article" date="1995" name="Plant Gene Register">
        <title>Nucleotide sequence of cDNA for a 1,3-beta-glucanase associated with aluminum toxicity in wheat roots.</title>
        <authorList>
            <person name="Cruz-Ortega R.M."/>
            <person name="Cushman J.C."/>
            <person name="Ownby J.D."/>
        </authorList>
        <locator>PGR95-073</locator>
    </citation>
    <scope>NUCLEOTIDE SEQUENCE [MRNA]</scope>
    <source>
        <strain>cv. Victory</strain>
        <tissue>Root</tissue>
    </source>
</reference>
<sequence length="461" mass="48873">MPLLILLMLLAAGAAGAESATPSLHIGVNYGANADNLPSPTSVATFLATKTTIDRVKLFDANPTFISAFAGTPISLAVSLPNSALPALADKATGLDAARSWIRANLSPYVPATNVTLLLAGNEILLSTDTNLILSLLPAMRRLAQALKAEGLTGVRVTTPHYLGILAPSDGIPSNASFRAGYNTKLFPAMLQFHRDTGSPFMVNPYPYFSYRPETLNYALFRPNSGIYDPATKLNYTSMLDAQMDAIYTAMKKLGYGDVDIAVGEAGWPTQAEPGQIGVGVQEARDFNEGMIRVCSSGKGTPLMPNRTFETYLFSLFDENQKPGPIAERHFGLFNPDFTPVYDLGLLRDGASVAPTPSPNPSPNPSPKPAPSGGGKWCVAKDGANGTDLQNNINYACGFVDCKPIQSGGACFSPNSLQAHASYVMNAYYQANGHTDLACDFKGTGIVTSSDPSYGGCKYVS</sequence>
<organism>
    <name type="scientific">Triticum aestivum</name>
    <name type="common">Wheat</name>
    <dbReference type="NCBI Taxonomy" id="4565"/>
    <lineage>
        <taxon>Eukaryota</taxon>
        <taxon>Viridiplantae</taxon>
        <taxon>Streptophyta</taxon>
        <taxon>Embryophyta</taxon>
        <taxon>Tracheophyta</taxon>
        <taxon>Spermatophyta</taxon>
        <taxon>Magnoliopsida</taxon>
        <taxon>Liliopsida</taxon>
        <taxon>Poales</taxon>
        <taxon>Poaceae</taxon>
        <taxon>BOP clade</taxon>
        <taxon>Pooideae</taxon>
        <taxon>Triticodae</taxon>
        <taxon>Triticeae</taxon>
        <taxon>Triticinae</taxon>
        <taxon>Triticum</taxon>
    </lineage>
</organism>
<evidence type="ECO:0000250" key="1"/>
<evidence type="ECO:0000250" key="2">
    <source>
        <dbReference type="UniProtKB" id="O22317"/>
    </source>
</evidence>
<evidence type="ECO:0000256" key="3">
    <source>
        <dbReference type="SAM" id="MobiDB-lite"/>
    </source>
</evidence>
<evidence type="ECO:0000305" key="4"/>
<gene>
    <name type="primary">GLC1</name>
</gene>
<feature type="signal peptide" evidence="1">
    <location>
        <begin position="1"/>
        <end position="23"/>
    </location>
</feature>
<feature type="chain" id="PRO_0000011881" description="Glucan endo-1,3-beta-glucosidase">
    <location>
        <begin position="24"/>
        <end position="461"/>
    </location>
</feature>
<feature type="region of interest" description="Disordered" evidence="3">
    <location>
        <begin position="350"/>
        <end position="375"/>
    </location>
</feature>
<feature type="compositionally biased region" description="Pro residues" evidence="3">
    <location>
        <begin position="356"/>
        <end position="370"/>
    </location>
</feature>
<feature type="active site" description="Proton donor" evidence="2">
    <location>
        <position position="123"/>
    </location>
</feature>
<feature type="active site" description="Nucleophile" evidence="2">
    <location>
        <position position="265"/>
    </location>
</feature>
<feature type="disulfide bond" evidence="1">
    <location>
        <begin position="378"/>
        <end position="439"/>
    </location>
</feature>
<protein>
    <recommendedName>
        <fullName>Glucan endo-1,3-beta-glucosidase</fullName>
        <ecNumber>3.2.1.39</ecNumber>
    </recommendedName>
    <alternativeName>
        <fullName>(1-&gt;3)-beta-glucan endohydrolase</fullName>
        <shortName>(1-&gt;3)-beta-glucanase</shortName>
    </alternativeName>
    <alternativeName>
        <fullName>Beta-1,3-endoglucanase</fullName>
    </alternativeName>
</protein>
<name>E13B_WHEAT</name>
<proteinExistence type="evidence at transcript level"/>
<keyword id="KW-1015">Disulfide bond</keyword>
<keyword id="KW-0326">Glycosidase</keyword>
<keyword id="KW-0378">Hydrolase</keyword>
<keyword id="KW-0611">Plant defense</keyword>
<keyword id="KW-1185">Reference proteome</keyword>
<keyword id="KW-0732">Signal</keyword>
<accession>P52409</accession>
<dbReference type="EC" id="3.2.1.39"/>
<dbReference type="EMBL" id="U30323">
    <property type="protein sequence ID" value="AAA90953.1"/>
    <property type="molecule type" value="mRNA"/>
</dbReference>
<dbReference type="PIR" id="T06268">
    <property type="entry name" value="T06268"/>
</dbReference>
<dbReference type="SMR" id="P52409"/>
<dbReference type="STRING" id="4565.P52409"/>
<dbReference type="CAZy" id="CBM43">
    <property type="family name" value="Carbohydrate-Binding Module Family 43"/>
</dbReference>
<dbReference type="CAZy" id="GH17">
    <property type="family name" value="Glycoside Hydrolase Family 17"/>
</dbReference>
<dbReference type="PaxDb" id="4565-Traes_4BS_E8B53F73C.2"/>
<dbReference type="EnsemblPlants" id="TraesARI4A03G02138190.1">
    <property type="protein sequence ID" value="TraesARI4A03G02138190.1"/>
    <property type="gene ID" value="TraesARI4A03G02138190"/>
</dbReference>
<dbReference type="EnsemblPlants" id="TraesCAD_scaffold_074949_01G000100.1">
    <property type="protein sequence ID" value="TraesCAD_scaffold_074949_01G000100.1"/>
    <property type="gene ID" value="TraesCAD_scaffold_074949_01G000100"/>
</dbReference>
<dbReference type="EnsemblPlants" id="TraesCLE_scaffold_073303_01G000100.1">
    <property type="protein sequence ID" value="TraesCLE_scaffold_073303_01G000100.1"/>
    <property type="gene ID" value="TraesCLE_scaffold_073303_01G000100"/>
</dbReference>
<dbReference type="EnsemblPlants" id="TraesCS4A02G175900.1">
    <property type="protein sequence ID" value="TraesCS4A02G175900.1"/>
    <property type="gene ID" value="TraesCS4A02G175900"/>
</dbReference>
<dbReference type="EnsemblPlants" id="TraesCS4A03G0481200.1">
    <property type="protein sequence ID" value="TraesCS4A03G0481200.1.CDS"/>
    <property type="gene ID" value="TraesCS4A03G0481200"/>
</dbReference>
<dbReference type="EnsemblPlants" id="TraesJUL4A03G02120110.1">
    <property type="protein sequence ID" value="TraesJUL4A03G02120110.1"/>
    <property type="gene ID" value="TraesJUL4A03G02120110"/>
</dbReference>
<dbReference type="EnsemblPlants" id="TraesLDM4A03G02099450.1">
    <property type="protein sequence ID" value="TraesLDM4A03G02099450.1"/>
    <property type="gene ID" value="TraesLDM4A03G02099450"/>
</dbReference>
<dbReference type="EnsemblPlants" id="TraesNOR4A03G02122550.1">
    <property type="protein sequence ID" value="TraesNOR4A03G02122550.1"/>
    <property type="gene ID" value="TraesNOR4A03G02122550"/>
</dbReference>
<dbReference type="EnsemblPlants" id="TraesPARA_EIv1.0_1261130.1">
    <property type="protein sequence ID" value="TraesPARA_EIv1.0_1261130.1.CDS"/>
    <property type="gene ID" value="TraesPARA_EIv1.0_1261130"/>
</dbReference>
<dbReference type="EnsemblPlants" id="TraesROB_scaffold_073539_01G000200.1">
    <property type="protein sequence ID" value="TraesROB_scaffold_073539_01G000200.1"/>
    <property type="gene ID" value="TraesROB_scaffold_073539_01G000200"/>
</dbReference>
<dbReference type="EnsemblPlants" id="TraesSTA4A03G02097200.1">
    <property type="protein sequence ID" value="TraesSTA4A03G02097200.1"/>
    <property type="gene ID" value="TraesSTA4A03G02097200"/>
</dbReference>
<dbReference type="EnsemblPlants" id="TraesSYM4A03G02127860.1">
    <property type="protein sequence ID" value="TraesSYM4A03G02127860.1"/>
    <property type="gene ID" value="TraesSYM4A03G02127860"/>
</dbReference>
<dbReference type="Gramene" id="TraesARI4A03G02138190.1">
    <property type="protein sequence ID" value="TraesARI4A03G02138190.1"/>
    <property type="gene ID" value="TraesARI4A03G02138190"/>
</dbReference>
<dbReference type="Gramene" id="TraesCAD_scaffold_074949_01G000100.1">
    <property type="protein sequence ID" value="TraesCAD_scaffold_074949_01G000100.1"/>
    <property type="gene ID" value="TraesCAD_scaffold_074949_01G000100"/>
</dbReference>
<dbReference type="Gramene" id="TraesCLE_scaffold_073303_01G000100.1">
    <property type="protein sequence ID" value="TraesCLE_scaffold_073303_01G000100.1"/>
    <property type="gene ID" value="TraesCLE_scaffold_073303_01G000100"/>
</dbReference>
<dbReference type="Gramene" id="TraesCS4A02G175900.1">
    <property type="protein sequence ID" value="TraesCS4A02G175900.1"/>
    <property type="gene ID" value="TraesCS4A02G175900"/>
</dbReference>
<dbReference type="Gramene" id="TraesCS4A03G0481200.1">
    <property type="protein sequence ID" value="TraesCS4A03G0481200.1.CDS"/>
    <property type="gene ID" value="TraesCS4A03G0481200"/>
</dbReference>
<dbReference type="Gramene" id="TraesJUL4A03G02120110.1">
    <property type="protein sequence ID" value="TraesJUL4A03G02120110.1"/>
    <property type="gene ID" value="TraesJUL4A03G02120110"/>
</dbReference>
<dbReference type="Gramene" id="TraesLDM4A03G02099450.1">
    <property type="protein sequence ID" value="TraesLDM4A03G02099450.1"/>
    <property type="gene ID" value="TraesLDM4A03G02099450"/>
</dbReference>
<dbReference type="Gramene" id="TraesNOR4A03G02122550.1">
    <property type="protein sequence ID" value="TraesNOR4A03G02122550.1"/>
    <property type="gene ID" value="TraesNOR4A03G02122550"/>
</dbReference>
<dbReference type="Gramene" id="TraesPARA_EIv1.0_1261130.1">
    <property type="protein sequence ID" value="TraesPARA_EIv1.0_1261130.1.CDS"/>
    <property type="gene ID" value="TraesPARA_EIv1.0_1261130"/>
</dbReference>
<dbReference type="Gramene" id="TraesROB_scaffold_073539_01G000200.1">
    <property type="protein sequence ID" value="TraesROB_scaffold_073539_01G000200.1"/>
    <property type="gene ID" value="TraesROB_scaffold_073539_01G000200"/>
</dbReference>
<dbReference type="Gramene" id="TraesSTA4A03G02097200.1">
    <property type="protein sequence ID" value="TraesSTA4A03G02097200.1"/>
    <property type="gene ID" value="TraesSTA4A03G02097200"/>
</dbReference>
<dbReference type="Gramene" id="TraesSYM4A03G02127860.1">
    <property type="protein sequence ID" value="TraesSYM4A03G02127860.1"/>
    <property type="gene ID" value="TraesSYM4A03G02127860"/>
</dbReference>
<dbReference type="eggNOG" id="ENOG502QTAD">
    <property type="taxonomic scope" value="Eukaryota"/>
</dbReference>
<dbReference type="OrthoDB" id="1938138at2759"/>
<dbReference type="Proteomes" id="UP000019116">
    <property type="component" value="Chromosome 4A"/>
</dbReference>
<dbReference type="ExpressionAtlas" id="P52409">
    <property type="expression patterns" value="baseline and differential"/>
</dbReference>
<dbReference type="GO" id="GO:0005886">
    <property type="term" value="C:plasma membrane"/>
    <property type="evidence" value="ECO:0000318"/>
    <property type="project" value="GO_Central"/>
</dbReference>
<dbReference type="GO" id="GO:0042973">
    <property type="term" value="F:glucan endo-1,3-beta-D-glucosidase activity"/>
    <property type="evidence" value="ECO:0007669"/>
    <property type="project" value="UniProtKB-EC"/>
</dbReference>
<dbReference type="GO" id="GO:0005975">
    <property type="term" value="P:carbohydrate metabolic process"/>
    <property type="evidence" value="ECO:0007669"/>
    <property type="project" value="InterPro"/>
</dbReference>
<dbReference type="GO" id="GO:0006952">
    <property type="term" value="P:defense response"/>
    <property type="evidence" value="ECO:0007669"/>
    <property type="project" value="UniProtKB-KW"/>
</dbReference>
<dbReference type="FunFam" id="3.20.20.80:FF:000002">
    <property type="entry name" value="Glucan endo-1,3-beta-glucosidase 3"/>
    <property type="match status" value="1"/>
</dbReference>
<dbReference type="FunFam" id="1.20.58.1040:FF:000003">
    <property type="entry name" value="glucan endo-1,3-beta-glucosidase 7"/>
    <property type="match status" value="1"/>
</dbReference>
<dbReference type="Gene3D" id="1.20.58.1040">
    <property type="match status" value="1"/>
</dbReference>
<dbReference type="Gene3D" id="3.20.20.80">
    <property type="entry name" value="Glycosidases"/>
    <property type="match status" value="1"/>
</dbReference>
<dbReference type="InterPro" id="IPR000490">
    <property type="entry name" value="Glyco_hydro_17"/>
</dbReference>
<dbReference type="InterPro" id="IPR044965">
    <property type="entry name" value="Glyco_hydro_17_plant"/>
</dbReference>
<dbReference type="InterPro" id="IPR017853">
    <property type="entry name" value="Glycoside_hydrolase_SF"/>
</dbReference>
<dbReference type="InterPro" id="IPR012946">
    <property type="entry name" value="X8"/>
</dbReference>
<dbReference type="PANTHER" id="PTHR32227">
    <property type="entry name" value="GLUCAN ENDO-1,3-BETA-GLUCOSIDASE BG1-RELATED-RELATED"/>
    <property type="match status" value="1"/>
</dbReference>
<dbReference type="Pfam" id="PF00332">
    <property type="entry name" value="Glyco_hydro_17"/>
    <property type="match status" value="1"/>
</dbReference>
<dbReference type="Pfam" id="PF07983">
    <property type="entry name" value="X8"/>
    <property type="match status" value="1"/>
</dbReference>
<dbReference type="SMART" id="SM00768">
    <property type="entry name" value="X8"/>
    <property type="match status" value="1"/>
</dbReference>
<dbReference type="SUPFAM" id="SSF51445">
    <property type="entry name" value="(Trans)glycosidases"/>
    <property type="match status" value="1"/>
</dbReference>
<dbReference type="PROSITE" id="PS00587">
    <property type="entry name" value="GLYCOSYL_HYDROL_F17"/>
    <property type="match status" value="1"/>
</dbReference>